<evidence type="ECO:0000255" key="1">
    <source>
        <dbReference type="HAMAP-Rule" id="MF_00531"/>
    </source>
</evidence>
<evidence type="ECO:0000305" key="2"/>
<dbReference type="EMBL" id="AE017263">
    <property type="protein sequence ID" value="AAT75483.1"/>
    <property type="molecule type" value="Genomic_DNA"/>
</dbReference>
<dbReference type="RefSeq" id="WP_011183024.1">
    <property type="nucleotide sequence ID" value="NC_006055.1"/>
</dbReference>
<dbReference type="RefSeq" id="YP_053367.1">
    <property type="nucleotide sequence ID" value="NC_006055.1"/>
</dbReference>
<dbReference type="SMR" id="Q6F1Z0"/>
<dbReference type="STRING" id="265311.Mfl127"/>
<dbReference type="PaxDb" id="265311-Mfl127"/>
<dbReference type="EnsemblBacteria" id="AAT75483">
    <property type="protein sequence ID" value="AAT75483"/>
    <property type="gene ID" value="Mfl127"/>
</dbReference>
<dbReference type="GeneID" id="2898286"/>
<dbReference type="KEGG" id="mfl:Mfl127"/>
<dbReference type="PATRIC" id="fig|265311.5.peg.128"/>
<dbReference type="eggNOG" id="COG0185">
    <property type="taxonomic scope" value="Bacteria"/>
</dbReference>
<dbReference type="HOGENOM" id="CLU_144911_0_1_14"/>
<dbReference type="OrthoDB" id="9797833at2"/>
<dbReference type="Proteomes" id="UP000006647">
    <property type="component" value="Chromosome"/>
</dbReference>
<dbReference type="GO" id="GO:0005737">
    <property type="term" value="C:cytoplasm"/>
    <property type="evidence" value="ECO:0007669"/>
    <property type="project" value="UniProtKB-ARBA"/>
</dbReference>
<dbReference type="GO" id="GO:0015935">
    <property type="term" value="C:small ribosomal subunit"/>
    <property type="evidence" value="ECO:0007669"/>
    <property type="project" value="InterPro"/>
</dbReference>
<dbReference type="GO" id="GO:0019843">
    <property type="term" value="F:rRNA binding"/>
    <property type="evidence" value="ECO:0007669"/>
    <property type="project" value="UniProtKB-UniRule"/>
</dbReference>
<dbReference type="GO" id="GO:0003735">
    <property type="term" value="F:structural constituent of ribosome"/>
    <property type="evidence" value="ECO:0007669"/>
    <property type="project" value="InterPro"/>
</dbReference>
<dbReference type="GO" id="GO:0000028">
    <property type="term" value="P:ribosomal small subunit assembly"/>
    <property type="evidence" value="ECO:0007669"/>
    <property type="project" value="TreeGrafter"/>
</dbReference>
<dbReference type="GO" id="GO:0006412">
    <property type="term" value="P:translation"/>
    <property type="evidence" value="ECO:0007669"/>
    <property type="project" value="UniProtKB-UniRule"/>
</dbReference>
<dbReference type="FunFam" id="3.30.860.10:FF:000001">
    <property type="entry name" value="30S ribosomal protein S19"/>
    <property type="match status" value="1"/>
</dbReference>
<dbReference type="Gene3D" id="3.30.860.10">
    <property type="entry name" value="30s Ribosomal Protein S19, Chain A"/>
    <property type="match status" value="1"/>
</dbReference>
<dbReference type="HAMAP" id="MF_00531">
    <property type="entry name" value="Ribosomal_uS19"/>
    <property type="match status" value="1"/>
</dbReference>
<dbReference type="InterPro" id="IPR002222">
    <property type="entry name" value="Ribosomal_uS19"/>
</dbReference>
<dbReference type="InterPro" id="IPR005732">
    <property type="entry name" value="Ribosomal_uS19_bac-type"/>
</dbReference>
<dbReference type="InterPro" id="IPR020934">
    <property type="entry name" value="Ribosomal_uS19_CS"/>
</dbReference>
<dbReference type="InterPro" id="IPR023575">
    <property type="entry name" value="Ribosomal_uS19_SF"/>
</dbReference>
<dbReference type="NCBIfam" id="TIGR01050">
    <property type="entry name" value="rpsS_bact"/>
    <property type="match status" value="1"/>
</dbReference>
<dbReference type="PANTHER" id="PTHR11880">
    <property type="entry name" value="RIBOSOMAL PROTEIN S19P FAMILY MEMBER"/>
    <property type="match status" value="1"/>
</dbReference>
<dbReference type="PANTHER" id="PTHR11880:SF8">
    <property type="entry name" value="SMALL RIBOSOMAL SUBUNIT PROTEIN US19M"/>
    <property type="match status" value="1"/>
</dbReference>
<dbReference type="Pfam" id="PF00203">
    <property type="entry name" value="Ribosomal_S19"/>
    <property type="match status" value="1"/>
</dbReference>
<dbReference type="PIRSF" id="PIRSF002144">
    <property type="entry name" value="Ribosomal_S19"/>
    <property type="match status" value="1"/>
</dbReference>
<dbReference type="PRINTS" id="PR00975">
    <property type="entry name" value="RIBOSOMALS19"/>
</dbReference>
<dbReference type="SUPFAM" id="SSF54570">
    <property type="entry name" value="Ribosomal protein S19"/>
    <property type="match status" value="1"/>
</dbReference>
<dbReference type="PROSITE" id="PS00323">
    <property type="entry name" value="RIBOSOMAL_S19"/>
    <property type="match status" value="1"/>
</dbReference>
<gene>
    <name evidence="1" type="primary">rpsS</name>
    <name type="ordered locus">Mfl127</name>
</gene>
<reference key="1">
    <citation type="submission" date="2004-06" db="EMBL/GenBank/DDBJ databases">
        <authorList>
            <person name="Birren B.W."/>
            <person name="Stange-Thomann N."/>
            <person name="Hafez N."/>
            <person name="DeCaprio D."/>
            <person name="Fisher S."/>
            <person name="Butler J."/>
            <person name="Elkins T."/>
            <person name="Kodira C.D."/>
            <person name="Major J."/>
            <person name="Wang S."/>
            <person name="Nicol R."/>
            <person name="Nusbaum C."/>
        </authorList>
    </citation>
    <scope>NUCLEOTIDE SEQUENCE [LARGE SCALE GENOMIC DNA]</scope>
    <source>
        <strain>ATCC 33453 / NBRC 100688 / NCTC 11704 / L1</strain>
    </source>
</reference>
<organism>
    <name type="scientific">Mesoplasma florum (strain ATCC 33453 / NBRC 100688 / NCTC 11704 / L1)</name>
    <name type="common">Acholeplasma florum</name>
    <dbReference type="NCBI Taxonomy" id="265311"/>
    <lineage>
        <taxon>Bacteria</taxon>
        <taxon>Bacillati</taxon>
        <taxon>Mycoplasmatota</taxon>
        <taxon>Mollicutes</taxon>
        <taxon>Entomoplasmatales</taxon>
        <taxon>Entomoplasmataceae</taxon>
        <taxon>Mesoplasma</taxon>
    </lineage>
</organism>
<protein>
    <recommendedName>
        <fullName evidence="1">Small ribosomal subunit protein uS19</fullName>
    </recommendedName>
    <alternativeName>
        <fullName evidence="2">30S ribosomal protein S19</fullName>
    </alternativeName>
</protein>
<feature type="chain" id="PRO_0000129849" description="Small ribosomal subunit protein uS19">
    <location>
        <begin position="1"/>
        <end position="87"/>
    </location>
</feature>
<comment type="function">
    <text evidence="1">Protein S19 forms a complex with S13 that binds strongly to the 16S ribosomal RNA.</text>
</comment>
<comment type="similarity">
    <text evidence="1">Belongs to the universal ribosomal protein uS19 family.</text>
</comment>
<name>RS19_MESFL</name>
<sequence length="87" mass="9796">MARSLKKGPFVDENLFKKAEVAKDGEVIKTWSRRSTIFPEFIGKTFGVYNGKEFIPVYVTEDMVGHKLGEFAPTRKFGGHGDDKGKK</sequence>
<accession>Q6F1Z0</accession>
<keyword id="KW-1185">Reference proteome</keyword>
<keyword id="KW-0687">Ribonucleoprotein</keyword>
<keyword id="KW-0689">Ribosomal protein</keyword>
<keyword id="KW-0694">RNA-binding</keyword>
<keyword id="KW-0699">rRNA-binding</keyword>
<proteinExistence type="inferred from homology"/>